<name>LEUD_NITV2</name>
<evidence type="ECO:0000255" key="1">
    <source>
        <dbReference type="HAMAP-Rule" id="MF_01032"/>
    </source>
</evidence>
<comment type="function">
    <text evidence="1">Catalyzes the isomerization between 2-isopropylmalate and 3-isopropylmalate, via the formation of 2-isopropylmaleate.</text>
</comment>
<comment type="catalytic activity">
    <reaction evidence="1">
        <text>(2R,3S)-3-isopropylmalate = (2S)-2-isopropylmalate</text>
        <dbReference type="Rhea" id="RHEA:32287"/>
        <dbReference type="ChEBI" id="CHEBI:1178"/>
        <dbReference type="ChEBI" id="CHEBI:35121"/>
        <dbReference type="EC" id="4.2.1.33"/>
    </reaction>
</comment>
<comment type="pathway">
    <text evidence="1">Amino-acid biosynthesis; L-leucine biosynthesis; L-leucine from 3-methyl-2-oxobutanoate: step 2/4.</text>
</comment>
<comment type="subunit">
    <text evidence="1">Heterodimer of LeuC and LeuD.</text>
</comment>
<comment type="interaction">
    <interactant intactId="EBI-10066099">
        <id>Q726X3</id>
    </interactant>
    <interactant intactId="EBI-10066095">
        <id>Q726X4</id>
        <label>leuC</label>
    </interactant>
    <organismsDiffer>false</organismsDiffer>
    <experiments>3</experiments>
</comment>
<comment type="similarity">
    <text evidence="1">Belongs to the LeuD family. LeuD type 2 subfamily.</text>
</comment>
<reference key="1">
    <citation type="journal article" date="2004" name="Nat. Biotechnol.">
        <title>The genome sequence of the anaerobic, sulfate-reducing bacterium Desulfovibrio vulgaris Hildenborough.</title>
        <authorList>
            <person name="Heidelberg J.F."/>
            <person name="Seshadri R."/>
            <person name="Haveman S.A."/>
            <person name="Hemme C.L."/>
            <person name="Paulsen I.T."/>
            <person name="Kolonay J.F."/>
            <person name="Eisen J.A."/>
            <person name="Ward N.L."/>
            <person name="Methe B.A."/>
            <person name="Brinkac L.M."/>
            <person name="Daugherty S.C."/>
            <person name="DeBoy R.T."/>
            <person name="Dodson R.J."/>
            <person name="Durkin A.S."/>
            <person name="Madupu R."/>
            <person name="Nelson W.C."/>
            <person name="Sullivan S.A."/>
            <person name="Fouts D.E."/>
            <person name="Haft D.H."/>
            <person name="Selengut J."/>
            <person name="Peterson J.D."/>
            <person name="Davidsen T.M."/>
            <person name="Zafar N."/>
            <person name="Zhou L."/>
            <person name="Radune D."/>
            <person name="Dimitrov G."/>
            <person name="Hance M."/>
            <person name="Tran K."/>
            <person name="Khouri H.M."/>
            <person name="Gill J."/>
            <person name="Utterback T.R."/>
            <person name="Feldblyum T.V."/>
            <person name="Wall J.D."/>
            <person name="Voordouw G."/>
            <person name="Fraser C.M."/>
        </authorList>
    </citation>
    <scope>NUCLEOTIDE SEQUENCE [LARGE SCALE GENOMIC DNA]</scope>
    <source>
        <strain>ATCC 29579 / DSM 644 / CCUG 34227 / NCIMB 8303 / VKM B-1760 / Hildenborough</strain>
    </source>
</reference>
<dbReference type="EC" id="4.2.1.33" evidence="1"/>
<dbReference type="EMBL" id="AE017285">
    <property type="protein sequence ID" value="AAS97454.1"/>
    <property type="molecule type" value="Genomic_DNA"/>
</dbReference>
<dbReference type="RefSeq" id="WP_010940242.1">
    <property type="nucleotide sequence ID" value="NC_002937.3"/>
</dbReference>
<dbReference type="RefSeq" id="YP_012194.1">
    <property type="nucleotide sequence ID" value="NC_002937.3"/>
</dbReference>
<dbReference type="SMR" id="Q726X3"/>
<dbReference type="IntAct" id="Q726X3">
    <property type="interactions" value="1"/>
</dbReference>
<dbReference type="STRING" id="882.DVU_2983"/>
<dbReference type="PaxDb" id="882-DVU_2983"/>
<dbReference type="EnsemblBacteria" id="AAS97454">
    <property type="protein sequence ID" value="AAS97454"/>
    <property type="gene ID" value="DVU_2983"/>
</dbReference>
<dbReference type="KEGG" id="dvu:DVU_2983"/>
<dbReference type="PATRIC" id="fig|882.5.peg.2700"/>
<dbReference type="eggNOG" id="COG0066">
    <property type="taxonomic scope" value="Bacteria"/>
</dbReference>
<dbReference type="HOGENOM" id="CLU_081378_1_1_7"/>
<dbReference type="OrthoDB" id="9777465at2"/>
<dbReference type="PhylomeDB" id="Q726X3"/>
<dbReference type="UniPathway" id="UPA00048">
    <property type="reaction ID" value="UER00071"/>
</dbReference>
<dbReference type="Proteomes" id="UP000002194">
    <property type="component" value="Chromosome"/>
</dbReference>
<dbReference type="GO" id="GO:0003861">
    <property type="term" value="F:3-isopropylmalate dehydratase activity"/>
    <property type="evidence" value="ECO:0007669"/>
    <property type="project" value="UniProtKB-UniRule"/>
</dbReference>
<dbReference type="GO" id="GO:0009098">
    <property type="term" value="P:L-leucine biosynthetic process"/>
    <property type="evidence" value="ECO:0007669"/>
    <property type="project" value="UniProtKB-UniRule"/>
</dbReference>
<dbReference type="CDD" id="cd01577">
    <property type="entry name" value="IPMI_Swivel"/>
    <property type="match status" value="1"/>
</dbReference>
<dbReference type="Gene3D" id="3.20.19.10">
    <property type="entry name" value="Aconitase, domain 4"/>
    <property type="match status" value="1"/>
</dbReference>
<dbReference type="HAMAP" id="MF_01032">
    <property type="entry name" value="LeuD_type2"/>
    <property type="match status" value="1"/>
</dbReference>
<dbReference type="InterPro" id="IPR015928">
    <property type="entry name" value="Aconitase/3IPM_dehydase_swvl"/>
</dbReference>
<dbReference type="InterPro" id="IPR000573">
    <property type="entry name" value="AconitaseA/IPMdHydase_ssu_swvl"/>
</dbReference>
<dbReference type="InterPro" id="IPR033940">
    <property type="entry name" value="IPMI_Swivel"/>
</dbReference>
<dbReference type="InterPro" id="IPR050075">
    <property type="entry name" value="LeuD"/>
</dbReference>
<dbReference type="InterPro" id="IPR011827">
    <property type="entry name" value="LeuD_type2/HacB/DmdB"/>
</dbReference>
<dbReference type="NCBIfam" id="TIGR02087">
    <property type="entry name" value="LEUD_arch"/>
    <property type="match status" value="1"/>
</dbReference>
<dbReference type="PANTHER" id="PTHR43345:SF2">
    <property type="entry name" value="3-ISOPROPYLMALATE DEHYDRATASE SMALL SUBUNIT 1"/>
    <property type="match status" value="1"/>
</dbReference>
<dbReference type="PANTHER" id="PTHR43345">
    <property type="entry name" value="3-ISOPROPYLMALATE DEHYDRATASE SMALL SUBUNIT 2-RELATED-RELATED"/>
    <property type="match status" value="1"/>
</dbReference>
<dbReference type="Pfam" id="PF00694">
    <property type="entry name" value="Aconitase_C"/>
    <property type="match status" value="1"/>
</dbReference>
<dbReference type="SUPFAM" id="SSF52016">
    <property type="entry name" value="LeuD/IlvD-like"/>
    <property type="match status" value="1"/>
</dbReference>
<feature type="chain" id="PRO_1000072966" description="3-isopropylmalate dehydratase small subunit">
    <location>
        <begin position="1"/>
        <end position="167"/>
    </location>
</feature>
<organism>
    <name type="scientific">Nitratidesulfovibrio vulgaris (strain ATCC 29579 / DSM 644 / CCUG 34227 / NCIMB 8303 / VKM B-1760 / Hildenborough)</name>
    <name type="common">Desulfovibrio vulgaris</name>
    <dbReference type="NCBI Taxonomy" id="882"/>
    <lineage>
        <taxon>Bacteria</taxon>
        <taxon>Pseudomonadati</taxon>
        <taxon>Thermodesulfobacteriota</taxon>
        <taxon>Desulfovibrionia</taxon>
        <taxon>Desulfovibrionales</taxon>
        <taxon>Desulfovibrionaceae</taxon>
        <taxon>Nitratidesulfovibrio</taxon>
    </lineage>
</organism>
<keyword id="KW-0028">Amino-acid biosynthesis</keyword>
<keyword id="KW-0100">Branched-chain amino acid biosynthesis</keyword>
<keyword id="KW-0432">Leucine biosynthesis</keyword>
<keyword id="KW-0456">Lyase</keyword>
<keyword id="KW-1185">Reference proteome</keyword>
<gene>
    <name evidence="1" type="primary">leuD</name>
    <name type="ordered locus">DVU_2983</name>
</gene>
<protein>
    <recommendedName>
        <fullName evidence="1">3-isopropylmalate dehydratase small subunit</fullName>
        <ecNumber evidence="1">4.2.1.33</ecNumber>
    </recommendedName>
    <alternativeName>
        <fullName evidence="1">Alpha-IPM isomerase</fullName>
        <shortName evidence="1">IPMI</shortName>
    </alternativeName>
    <alternativeName>
        <fullName evidence="1">Isopropylmalate isomerase</fullName>
    </alternativeName>
</protein>
<accession>Q726X3</accession>
<proteinExistence type="evidence at protein level"/>
<sequence>MRYAGTAHKVGDHIDTDAIIPARFLVTTDAQKLGENCMEGLEHGWVARVKSGDIMVGGRNFGCGSSREHAPIAILGAGMPVVVAHSFARIFYRNGFNMGLLLLEVGDDVDKIADGDDIEVDAASGVITNRTTGATITCAPVPQSMRELLDTGGLVPYVRARLERENG</sequence>